<protein>
    <recommendedName>
        <fullName evidence="1">tRNA (guanine-N(7)-)-methyltransferase</fullName>
        <ecNumber evidence="1">2.1.1.33</ecNumber>
    </recommendedName>
    <alternativeName>
        <fullName evidence="1">tRNA (guanine(46)-N(7))-methyltransferase</fullName>
    </alternativeName>
    <alternativeName>
        <fullName evidence="1">tRNA(m7G46)-methyltransferase</fullName>
    </alternativeName>
</protein>
<gene>
    <name type="ORF">GL18335</name>
</gene>
<comment type="function">
    <text evidence="1">Catalyzes the formation of N(7)-methylguanine at position 46 (m7G46) in tRNA.</text>
</comment>
<comment type="catalytic activity">
    <reaction evidence="1">
        <text>guanosine(46) in tRNA + S-adenosyl-L-methionine = N(7)-methylguanosine(46) in tRNA + S-adenosyl-L-homocysteine</text>
        <dbReference type="Rhea" id="RHEA:42708"/>
        <dbReference type="Rhea" id="RHEA-COMP:10188"/>
        <dbReference type="Rhea" id="RHEA-COMP:10189"/>
        <dbReference type="ChEBI" id="CHEBI:57856"/>
        <dbReference type="ChEBI" id="CHEBI:59789"/>
        <dbReference type="ChEBI" id="CHEBI:74269"/>
        <dbReference type="ChEBI" id="CHEBI:74480"/>
        <dbReference type="EC" id="2.1.1.33"/>
    </reaction>
</comment>
<comment type="pathway">
    <text evidence="1">tRNA modification; N(7)-methylguanine-tRNA biosynthesis.</text>
</comment>
<comment type="subcellular location">
    <subcellularLocation>
        <location evidence="1">Nucleus</location>
    </subcellularLocation>
</comment>
<comment type="similarity">
    <text evidence="1">Belongs to the class I-like SAM-binding methyltransferase superfamily. TrmB family.</text>
</comment>
<sequence>MVTTTPENEVLTSTSAVTGLPQKRYYRQRAHSNPIADHCFDYPARPEDVDWRSLYPSIRADQEVSFADIGCGYGGFLVTLGELFPEKISIGMEIRVKVSDYVLDRITALRQKSSGTGAYQNIACLRTNAMKYLPNYFRKGQLEKMFFLYPDPHFKRAKHKWRIINQALLSEYAYVLRKGGLVYTMTDVEDLHNWIVTHMDEHPLYERLDEEEANTDPITPKLYQSSEEGAKVVRNKGDHFLAIFRRL</sequence>
<organism>
    <name type="scientific">Drosophila persimilis</name>
    <name type="common">Fruit fly</name>
    <dbReference type="NCBI Taxonomy" id="7234"/>
    <lineage>
        <taxon>Eukaryota</taxon>
        <taxon>Metazoa</taxon>
        <taxon>Ecdysozoa</taxon>
        <taxon>Arthropoda</taxon>
        <taxon>Hexapoda</taxon>
        <taxon>Insecta</taxon>
        <taxon>Pterygota</taxon>
        <taxon>Neoptera</taxon>
        <taxon>Endopterygota</taxon>
        <taxon>Diptera</taxon>
        <taxon>Brachycera</taxon>
        <taxon>Muscomorpha</taxon>
        <taxon>Ephydroidea</taxon>
        <taxon>Drosophilidae</taxon>
        <taxon>Drosophila</taxon>
        <taxon>Sophophora</taxon>
    </lineage>
</organism>
<reference key="1">
    <citation type="journal article" date="2007" name="Nature">
        <title>Evolution of genes and genomes on the Drosophila phylogeny.</title>
        <authorList>
            <consortium name="Drosophila 12 genomes consortium"/>
        </authorList>
    </citation>
    <scope>NUCLEOTIDE SEQUENCE [LARGE SCALE GENOMIC DNA]</scope>
    <source>
        <strain>MSH-3 / Tucson 14011-0111.49</strain>
    </source>
</reference>
<keyword id="KW-0489">Methyltransferase</keyword>
<keyword id="KW-0539">Nucleus</keyword>
<keyword id="KW-1185">Reference proteome</keyword>
<keyword id="KW-0694">RNA-binding</keyword>
<keyword id="KW-0949">S-adenosyl-L-methionine</keyword>
<keyword id="KW-0808">Transferase</keyword>
<keyword id="KW-0819">tRNA processing</keyword>
<keyword id="KW-0820">tRNA-binding</keyword>
<evidence type="ECO:0000255" key="1">
    <source>
        <dbReference type="HAMAP-Rule" id="MF_03055"/>
    </source>
</evidence>
<proteinExistence type="inferred from homology"/>
<feature type="chain" id="PRO_0000370572" description="tRNA (guanine-N(7)-)-methyltransferase">
    <location>
        <begin position="1"/>
        <end position="247"/>
    </location>
</feature>
<feature type="active site" evidence="1">
    <location>
        <position position="151"/>
    </location>
</feature>
<feature type="binding site" evidence="1">
    <location>
        <position position="70"/>
    </location>
    <ligand>
        <name>S-adenosyl-L-methionine</name>
        <dbReference type="ChEBI" id="CHEBI:59789"/>
    </ligand>
</feature>
<feature type="binding site" evidence="1">
    <location>
        <begin position="93"/>
        <end position="94"/>
    </location>
    <ligand>
        <name>S-adenosyl-L-methionine</name>
        <dbReference type="ChEBI" id="CHEBI:59789"/>
    </ligand>
</feature>
<feature type="binding site" evidence="1">
    <location>
        <begin position="128"/>
        <end position="129"/>
    </location>
    <ligand>
        <name>S-adenosyl-L-methionine</name>
        <dbReference type="ChEBI" id="CHEBI:59789"/>
    </ligand>
</feature>
<feature type="binding site" evidence="1">
    <location>
        <position position="148"/>
    </location>
    <ligand>
        <name>S-adenosyl-L-methionine</name>
        <dbReference type="ChEBI" id="CHEBI:59789"/>
    </ligand>
</feature>
<feature type="binding site" evidence="1">
    <location>
        <begin position="226"/>
        <end position="228"/>
    </location>
    <ligand>
        <name>S-adenosyl-L-methionine</name>
        <dbReference type="ChEBI" id="CHEBI:59789"/>
    </ligand>
</feature>
<accession>B4H4I3</accession>
<dbReference type="EC" id="2.1.1.33" evidence="1"/>
<dbReference type="EMBL" id="CH479209">
    <property type="protein sequence ID" value="EDW32734.1"/>
    <property type="molecule type" value="Genomic_DNA"/>
</dbReference>
<dbReference type="SMR" id="B4H4I3"/>
<dbReference type="STRING" id="7234.B4H4I3"/>
<dbReference type="EnsemblMetazoa" id="FBtr0183950">
    <property type="protein sequence ID" value="FBpp0182442"/>
    <property type="gene ID" value="FBgn0155936"/>
</dbReference>
<dbReference type="EnsemblMetazoa" id="XM_002025802.2">
    <property type="protein sequence ID" value="XP_002025838.1"/>
    <property type="gene ID" value="LOC6600770"/>
</dbReference>
<dbReference type="GeneID" id="6600770"/>
<dbReference type="KEGG" id="dpe:6600770"/>
<dbReference type="eggNOG" id="KOG3115">
    <property type="taxonomic scope" value="Eukaryota"/>
</dbReference>
<dbReference type="HOGENOM" id="CLU_050910_3_0_1"/>
<dbReference type="OMA" id="LPNYFAK"/>
<dbReference type="OrthoDB" id="47276at2759"/>
<dbReference type="PhylomeDB" id="B4H4I3"/>
<dbReference type="UniPathway" id="UPA00989"/>
<dbReference type="Proteomes" id="UP000008744">
    <property type="component" value="Unassembled WGS sequence"/>
</dbReference>
<dbReference type="GO" id="GO:0005634">
    <property type="term" value="C:nucleus"/>
    <property type="evidence" value="ECO:0007669"/>
    <property type="project" value="UniProtKB-SubCell"/>
</dbReference>
<dbReference type="GO" id="GO:0043527">
    <property type="term" value="C:tRNA methyltransferase complex"/>
    <property type="evidence" value="ECO:0007669"/>
    <property type="project" value="TreeGrafter"/>
</dbReference>
<dbReference type="GO" id="GO:0008176">
    <property type="term" value="F:tRNA (guanine(46)-N7)-methyltransferase activity"/>
    <property type="evidence" value="ECO:0007669"/>
    <property type="project" value="UniProtKB-UniRule"/>
</dbReference>
<dbReference type="GO" id="GO:0000049">
    <property type="term" value="F:tRNA binding"/>
    <property type="evidence" value="ECO:0007669"/>
    <property type="project" value="UniProtKB-UniRule"/>
</dbReference>
<dbReference type="FunFam" id="3.40.50.150:FF:000060">
    <property type="entry name" value="tRNA (guanine-N(7)-)-methyltransferase"/>
    <property type="match status" value="1"/>
</dbReference>
<dbReference type="Gene3D" id="3.40.50.150">
    <property type="entry name" value="Vaccinia Virus protein VP39"/>
    <property type="match status" value="1"/>
</dbReference>
<dbReference type="HAMAP" id="MF_03055">
    <property type="entry name" value="tRNA_methyltr_TrmB_euk"/>
    <property type="match status" value="1"/>
</dbReference>
<dbReference type="InterPro" id="IPR029063">
    <property type="entry name" value="SAM-dependent_MTases_sf"/>
</dbReference>
<dbReference type="InterPro" id="IPR025763">
    <property type="entry name" value="Trm8_euk"/>
</dbReference>
<dbReference type="InterPro" id="IPR003358">
    <property type="entry name" value="tRNA_(Gua-N-7)_MeTrfase_Trmb"/>
</dbReference>
<dbReference type="NCBIfam" id="TIGR00091">
    <property type="entry name" value="tRNA (guanosine(46)-N7)-methyltransferase TrmB"/>
    <property type="match status" value="1"/>
</dbReference>
<dbReference type="PANTHER" id="PTHR23417">
    <property type="entry name" value="3-DEOXY-D-MANNO-OCTULOSONIC-ACID TRANSFERASE/TRNA GUANINE-N 7 - -METHYLTRANSFERASE"/>
    <property type="match status" value="1"/>
</dbReference>
<dbReference type="PANTHER" id="PTHR23417:SF16">
    <property type="entry name" value="TRNA (GUANINE-N(7)-)-METHYLTRANSFERASE"/>
    <property type="match status" value="1"/>
</dbReference>
<dbReference type="Pfam" id="PF02390">
    <property type="entry name" value="Methyltransf_4"/>
    <property type="match status" value="1"/>
</dbReference>
<dbReference type="SUPFAM" id="SSF53335">
    <property type="entry name" value="S-adenosyl-L-methionine-dependent methyltransferases"/>
    <property type="match status" value="1"/>
</dbReference>
<dbReference type="PROSITE" id="PS51625">
    <property type="entry name" value="SAM_MT_TRMB"/>
    <property type="match status" value="1"/>
</dbReference>
<name>TRMB_DROPE</name>